<proteinExistence type="evidence at protein level"/>
<keyword id="KW-0027">Amidation</keyword>
<keyword id="KW-0903">Direct protein sequencing</keyword>
<keyword id="KW-1015">Disulfide bond</keyword>
<keyword id="KW-0872">Ion channel impairing toxin</keyword>
<keyword id="KW-0528">Neurotoxin</keyword>
<keyword id="KW-0964">Secreted</keyword>
<keyword id="KW-0732">Signal</keyword>
<keyword id="KW-0800">Toxin</keyword>
<keyword id="KW-0738">Voltage-gated sodium channel impairing toxin</keyword>
<evidence type="ECO:0000250" key="1"/>
<evidence type="ECO:0000255" key="2">
    <source>
        <dbReference type="PROSITE-ProRule" id="PRU01210"/>
    </source>
</evidence>
<evidence type="ECO:0000269" key="3">
    <source>
    </source>
</evidence>
<evidence type="ECO:0000305" key="4"/>
<accession>P0C5J0</accession>
<organism>
    <name type="scientific">Leiurus hebraeus</name>
    <name type="common">Hebrew deathstalker scorpion</name>
    <name type="synonym">Leiurus quinquestriatus hebraeus</name>
    <dbReference type="NCBI Taxonomy" id="2899558"/>
    <lineage>
        <taxon>Eukaryota</taxon>
        <taxon>Metazoa</taxon>
        <taxon>Ecdysozoa</taxon>
        <taxon>Arthropoda</taxon>
        <taxon>Chelicerata</taxon>
        <taxon>Arachnida</taxon>
        <taxon>Scorpiones</taxon>
        <taxon>Buthida</taxon>
        <taxon>Buthoidea</taxon>
        <taxon>Buthidae</taxon>
        <taxon>Leiurus</taxon>
    </lineage>
</organism>
<reference key="1">
    <citation type="journal article" date="2005" name="Biochemistry">
        <title>Genetic polymorphism and expression of a highly potent scorpion depressant toxin enable refinement of the effects on insect Na channels and illuminate the key role of Asn-58.</title>
        <authorList>
            <person name="Strugatsky D."/>
            <person name="Zilberberg N."/>
            <person name="Stankiewicz M."/>
            <person name="Ilan N."/>
            <person name="Turkov M."/>
            <person name="Cohen L."/>
            <person name="Pelhate M."/>
            <person name="Gilles N."/>
            <person name="Gordon D."/>
            <person name="Gurevitz M."/>
        </authorList>
    </citation>
    <scope>NUCLEOTIDE SEQUENCE [MRNA]</scope>
    <scope>PARTIAL PROTEIN SEQUENCE</scope>
    <scope>FUNCTION</scope>
    <scope>TOXIC DOSE</scope>
    <source>
        <tissue>Venom</tissue>
        <tissue>Venom gland</tissue>
    </source>
</reference>
<sequence>MKLLLLLTISASMLIEGLVNADGYIRGGDGCKVSCVINHVFCDNECKAAGGSYGYCWAWGLACWCEGLPAEREWDYETDTCGGKK</sequence>
<name>SIX3H_LEIHE</name>
<dbReference type="SMR" id="P0C5J0"/>
<dbReference type="GO" id="GO:0005576">
    <property type="term" value="C:extracellular region"/>
    <property type="evidence" value="ECO:0007669"/>
    <property type="project" value="UniProtKB-SubCell"/>
</dbReference>
<dbReference type="GO" id="GO:0019871">
    <property type="term" value="F:sodium channel inhibitor activity"/>
    <property type="evidence" value="ECO:0007669"/>
    <property type="project" value="InterPro"/>
</dbReference>
<dbReference type="GO" id="GO:0090729">
    <property type="term" value="F:toxin activity"/>
    <property type="evidence" value="ECO:0007669"/>
    <property type="project" value="UniProtKB-KW"/>
</dbReference>
<dbReference type="GO" id="GO:0006952">
    <property type="term" value="P:defense response"/>
    <property type="evidence" value="ECO:0007669"/>
    <property type="project" value="InterPro"/>
</dbReference>
<dbReference type="CDD" id="cd23106">
    <property type="entry name" value="neurotoxins_LC_scorpion"/>
    <property type="match status" value="1"/>
</dbReference>
<dbReference type="Gene3D" id="3.30.30.10">
    <property type="entry name" value="Knottin, scorpion toxin-like"/>
    <property type="match status" value="1"/>
</dbReference>
<dbReference type="InterPro" id="IPR044062">
    <property type="entry name" value="LCN-type_CS_alpha_beta_dom"/>
</dbReference>
<dbReference type="InterPro" id="IPR003614">
    <property type="entry name" value="Scorpion_toxin-like"/>
</dbReference>
<dbReference type="InterPro" id="IPR036574">
    <property type="entry name" value="Scorpion_toxin-like_sf"/>
</dbReference>
<dbReference type="InterPro" id="IPR018218">
    <property type="entry name" value="Scorpion_toxinL"/>
</dbReference>
<dbReference type="InterPro" id="IPR002061">
    <property type="entry name" value="Scorpion_toxinL/defensin"/>
</dbReference>
<dbReference type="Pfam" id="PF00537">
    <property type="entry name" value="Toxin_3"/>
    <property type="match status" value="1"/>
</dbReference>
<dbReference type="PRINTS" id="PR00285">
    <property type="entry name" value="SCORPNTOXIN"/>
</dbReference>
<dbReference type="SMART" id="SM00505">
    <property type="entry name" value="Knot1"/>
    <property type="match status" value="1"/>
</dbReference>
<dbReference type="SUPFAM" id="SSF57095">
    <property type="entry name" value="Scorpion toxin-like"/>
    <property type="match status" value="1"/>
</dbReference>
<dbReference type="PROSITE" id="PS51863">
    <property type="entry name" value="LCN_CSAB"/>
    <property type="match status" value="1"/>
</dbReference>
<comment type="function">
    <text evidence="3">Depressant insect beta-toxins cause a transient contraction paralysis followed by a slow flaccid paralysis. They bind voltage-independently at site-4 of sodium channels (Nav) and block action potentials, primarily by depolarizing the axonal membrane and suppressing the sodium current. This depressant toxin is active only on insects. It is found in a relatively small amount in the venom.</text>
</comment>
<comment type="subcellular location">
    <subcellularLocation>
        <location>Secreted</location>
    </subcellularLocation>
</comment>
<comment type="tissue specificity">
    <text>Expressed by the venom gland.</text>
</comment>
<comment type="domain">
    <text evidence="4">Has the structural arrangement of an alpha-helix connected to antiparallel beta-sheets by disulfide bonds (CS-alpha/beta).</text>
</comment>
<comment type="toxic dose">
    <text evidence="3">PD(50) is 19 ng/100 mg of body weight of Sarcophaga larvae for contraction paralysis, and 85 ng/100 mg for flaccid paralysis.</text>
</comment>
<comment type="similarity">
    <text evidence="4">Belongs to the long (4 C-C) scorpion toxin superfamily. Sodium channel inhibitor family. Beta subfamily.</text>
</comment>
<protein>
    <recommendedName>
        <fullName>Beta-insect depressant toxin Lqh-dprIT3h</fullName>
    </recommendedName>
</protein>
<feature type="signal peptide">
    <location>
        <begin position="1"/>
        <end position="21"/>
    </location>
</feature>
<feature type="chain" id="PRO_0000307618" description="Beta-insect depressant toxin Lqh-dprIT3h">
    <location>
        <begin position="22"/>
        <end position="82"/>
    </location>
</feature>
<feature type="domain" description="LCN-type CS-alpha/beta" evidence="2">
    <location>
        <begin position="22"/>
        <end position="82"/>
    </location>
</feature>
<feature type="modified residue" description="Glycine amide" evidence="1">
    <location>
        <position position="82"/>
    </location>
</feature>
<feature type="disulfide bond" evidence="2">
    <location>
        <begin position="31"/>
        <end position="81"/>
    </location>
</feature>
<feature type="disulfide bond" evidence="2">
    <location>
        <begin position="35"/>
        <end position="56"/>
    </location>
</feature>
<feature type="disulfide bond" evidence="2">
    <location>
        <begin position="42"/>
        <end position="63"/>
    </location>
</feature>
<feature type="disulfide bond" evidence="2">
    <location>
        <begin position="46"/>
        <end position="65"/>
    </location>
</feature>